<comment type="subcellular location">
    <subcellularLocation>
        <location evidence="1">Cell membrane</location>
        <topology evidence="1">Multi-pass membrane protein</topology>
    </subcellularLocation>
</comment>
<comment type="similarity">
    <text evidence="1">Belongs to the UPF0114 family.</text>
</comment>
<feature type="chain" id="PRO_1000009494" description="UPF0114 protein Sputcn32_0673">
    <location>
        <begin position="1"/>
        <end position="162"/>
    </location>
</feature>
<feature type="transmembrane region" description="Helical" evidence="1">
    <location>
        <begin position="15"/>
        <end position="35"/>
    </location>
</feature>
<feature type="transmembrane region" description="Helical" evidence="1">
    <location>
        <begin position="53"/>
        <end position="73"/>
    </location>
</feature>
<feature type="transmembrane region" description="Helical" evidence="1">
    <location>
        <begin position="136"/>
        <end position="156"/>
    </location>
</feature>
<name>Y673_SHEPC</name>
<organism>
    <name type="scientific">Shewanella putrefaciens (strain CN-32 / ATCC BAA-453)</name>
    <dbReference type="NCBI Taxonomy" id="319224"/>
    <lineage>
        <taxon>Bacteria</taxon>
        <taxon>Pseudomonadati</taxon>
        <taxon>Pseudomonadota</taxon>
        <taxon>Gammaproteobacteria</taxon>
        <taxon>Alteromonadales</taxon>
        <taxon>Shewanellaceae</taxon>
        <taxon>Shewanella</taxon>
    </lineage>
</organism>
<sequence length="162" mass="18410">MEKIFERLMYASRWIMAPIYLGLSLVLLGLGIKFFQEIFHVLPIIFEMREVDLVLVTLSLIDITLVGGLIVMVMFSGYENFVSQLDVGEDSEKLSWLGKLDSGSLKNKVAASIVAISSIHLLKIFMNVENISNDKIMWYLLIHITFVLSAFAMGYLDKITRK</sequence>
<protein>
    <recommendedName>
        <fullName evidence="1">UPF0114 protein Sputcn32_0673</fullName>
    </recommendedName>
</protein>
<gene>
    <name type="ordered locus">Sputcn32_0673</name>
</gene>
<evidence type="ECO:0000255" key="1">
    <source>
        <dbReference type="HAMAP-Rule" id="MF_00143"/>
    </source>
</evidence>
<proteinExistence type="inferred from homology"/>
<accession>A4Y370</accession>
<reference key="1">
    <citation type="submission" date="2007-04" db="EMBL/GenBank/DDBJ databases">
        <title>Complete sequence of Shewanella putrefaciens CN-32.</title>
        <authorList>
            <consortium name="US DOE Joint Genome Institute"/>
            <person name="Copeland A."/>
            <person name="Lucas S."/>
            <person name="Lapidus A."/>
            <person name="Barry K."/>
            <person name="Detter J.C."/>
            <person name="Glavina del Rio T."/>
            <person name="Hammon N."/>
            <person name="Israni S."/>
            <person name="Dalin E."/>
            <person name="Tice H."/>
            <person name="Pitluck S."/>
            <person name="Chain P."/>
            <person name="Malfatti S."/>
            <person name="Shin M."/>
            <person name="Vergez L."/>
            <person name="Schmutz J."/>
            <person name="Larimer F."/>
            <person name="Land M."/>
            <person name="Hauser L."/>
            <person name="Kyrpides N."/>
            <person name="Mikhailova N."/>
            <person name="Romine M.F."/>
            <person name="Fredrickson J."/>
            <person name="Tiedje J."/>
            <person name="Richardson P."/>
        </authorList>
    </citation>
    <scope>NUCLEOTIDE SEQUENCE [LARGE SCALE GENOMIC DNA]</scope>
    <source>
        <strain>CN-32 / ATCC BAA-453</strain>
    </source>
</reference>
<keyword id="KW-1003">Cell membrane</keyword>
<keyword id="KW-0472">Membrane</keyword>
<keyword id="KW-0812">Transmembrane</keyword>
<keyword id="KW-1133">Transmembrane helix</keyword>
<dbReference type="EMBL" id="CP000681">
    <property type="protein sequence ID" value="ABP74403.1"/>
    <property type="molecule type" value="Genomic_DNA"/>
</dbReference>
<dbReference type="STRING" id="319224.Sputcn32_0673"/>
<dbReference type="KEGG" id="spc:Sputcn32_0673"/>
<dbReference type="eggNOG" id="COG2862">
    <property type="taxonomic scope" value="Bacteria"/>
</dbReference>
<dbReference type="HOGENOM" id="CLU_097887_1_1_6"/>
<dbReference type="GO" id="GO:0005886">
    <property type="term" value="C:plasma membrane"/>
    <property type="evidence" value="ECO:0007669"/>
    <property type="project" value="UniProtKB-SubCell"/>
</dbReference>
<dbReference type="HAMAP" id="MF_00143">
    <property type="entry name" value="UPF0114"/>
    <property type="match status" value="1"/>
</dbReference>
<dbReference type="InterPro" id="IPR005134">
    <property type="entry name" value="UPF0114"/>
</dbReference>
<dbReference type="InterPro" id="IPR020761">
    <property type="entry name" value="UPF0114_bac"/>
</dbReference>
<dbReference type="NCBIfam" id="TIGR00645">
    <property type="entry name" value="HI0507"/>
    <property type="match status" value="1"/>
</dbReference>
<dbReference type="PANTHER" id="PTHR38596">
    <property type="entry name" value="UPF0114 PROTEIN YQHA"/>
    <property type="match status" value="1"/>
</dbReference>
<dbReference type="PANTHER" id="PTHR38596:SF1">
    <property type="entry name" value="UPF0114 PROTEIN YQHA"/>
    <property type="match status" value="1"/>
</dbReference>
<dbReference type="Pfam" id="PF03350">
    <property type="entry name" value="UPF0114"/>
    <property type="match status" value="1"/>
</dbReference>